<accession>A8FST7</accession>
<feature type="chain" id="PRO_1000075563" description="DNA mismatch repair protein MutS">
    <location>
        <begin position="1"/>
        <end position="859"/>
    </location>
</feature>
<feature type="binding site" evidence="1">
    <location>
        <begin position="618"/>
        <end position="625"/>
    </location>
    <ligand>
        <name>ATP</name>
        <dbReference type="ChEBI" id="CHEBI:30616"/>
    </ligand>
</feature>
<reference key="1">
    <citation type="submission" date="2007-08" db="EMBL/GenBank/DDBJ databases">
        <title>Complete sequence of Shewanella sediminis HAW-EB3.</title>
        <authorList>
            <consortium name="US DOE Joint Genome Institute"/>
            <person name="Copeland A."/>
            <person name="Lucas S."/>
            <person name="Lapidus A."/>
            <person name="Barry K."/>
            <person name="Glavina del Rio T."/>
            <person name="Dalin E."/>
            <person name="Tice H."/>
            <person name="Pitluck S."/>
            <person name="Chertkov O."/>
            <person name="Brettin T."/>
            <person name="Bruce D."/>
            <person name="Detter J.C."/>
            <person name="Han C."/>
            <person name="Schmutz J."/>
            <person name="Larimer F."/>
            <person name="Land M."/>
            <person name="Hauser L."/>
            <person name="Kyrpides N."/>
            <person name="Kim E."/>
            <person name="Zhao J.-S."/>
            <person name="Richardson P."/>
        </authorList>
    </citation>
    <scope>NUCLEOTIDE SEQUENCE [LARGE SCALE GENOMIC DNA]</scope>
    <source>
        <strain>HAW-EB3</strain>
    </source>
</reference>
<proteinExistence type="inferred from homology"/>
<gene>
    <name evidence="1" type="primary">mutS</name>
    <name type="ordered locus">Ssed_1299</name>
</gene>
<dbReference type="EMBL" id="CP000821">
    <property type="protein sequence ID" value="ABV35910.1"/>
    <property type="molecule type" value="Genomic_DNA"/>
</dbReference>
<dbReference type="RefSeq" id="WP_012141646.1">
    <property type="nucleotide sequence ID" value="NC_009831.1"/>
</dbReference>
<dbReference type="SMR" id="A8FST7"/>
<dbReference type="STRING" id="425104.Ssed_1299"/>
<dbReference type="KEGG" id="sse:Ssed_1299"/>
<dbReference type="eggNOG" id="COG0249">
    <property type="taxonomic scope" value="Bacteria"/>
</dbReference>
<dbReference type="HOGENOM" id="CLU_002472_4_0_6"/>
<dbReference type="OrthoDB" id="9802448at2"/>
<dbReference type="Proteomes" id="UP000002015">
    <property type="component" value="Chromosome"/>
</dbReference>
<dbReference type="GO" id="GO:0005829">
    <property type="term" value="C:cytosol"/>
    <property type="evidence" value="ECO:0007669"/>
    <property type="project" value="TreeGrafter"/>
</dbReference>
<dbReference type="GO" id="GO:0005524">
    <property type="term" value="F:ATP binding"/>
    <property type="evidence" value="ECO:0007669"/>
    <property type="project" value="UniProtKB-UniRule"/>
</dbReference>
<dbReference type="GO" id="GO:0140664">
    <property type="term" value="F:ATP-dependent DNA damage sensor activity"/>
    <property type="evidence" value="ECO:0007669"/>
    <property type="project" value="InterPro"/>
</dbReference>
<dbReference type="GO" id="GO:0003684">
    <property type="term" value="F:damaged DNA binding"/>
    <property type="evidence" value="ECO:0007669"/>
    <property type="project" value="UniProtKB-UniRule"/>
</dbReference>
<dbReference type="GO" id="GO:0030983">
    <property type="term" value="F:mismatched DNA binding"/>
    <property type="evidence" value="ECO:0007669"/>
    <property type="project" value="InterPro"/>
</dbReference>
<dbReference type="GO" id="GO:0006298">
    <property type="term" value="P:mismatch repair"/>
    <property type="evidence" value="ECO:0007669"/>
    <property type="project" value="UniProtKB-UniRule"/>
</dbReference>
<dbReference type="CDD" id="cd03284">
    <property type="entry name" value="ABC_MutS1"/>
    <property type="match status" value="1"/>
</dbReference>
<dbReference type="FunFam" id="1.10.1420.10:FF:000002">
    <property type="entry name" value="DNA mismatch repair protein MutS"/>
    <property type="match status" value="1"/>
</dbReference>
<dbReference type="FunFam" id="3.30.420.110:FF:000001">
    <property type="entry name" value="DNA mismatch repair protein MutS"/>
    <property type="match status" value="1"/>
</dbReference>
<dbReference type="FunFam" id="3.40.1170.10:FF:000001">
    <property type="entry name" value="DNA mismatch repair protein MutS"/>
    <property type="match status" value="1"/>
</dbReference>
<dbReference type="FunFam" id="3.40.50.300:FF:000283">
    <property type="entry name" value="DNA mismatch repair protein MutS"/>
    <property type="match status" value="1"/>
</dbReference>
<dbReference type="Gene3D" id="1.10.1420.10">
    <property type="match status" value="2"/>
</dbReference>
<dbReference type="Gene3D" id="6.10.140.430">
    <property type="match status" value="1"/>
</dbReference>
<dbReference type="Gene3D" id="3.40.1170.10">
    <property type="entry name" value="DNA repair protein MutS, domain I"/>
    <property type="match status" value="1"/>
</dbReference>
<dbReference type="Gene3D" id="3.30.420.110">
    <property type="entry name" value="MutS, connector domain"/>
    <property type="match status" value="1"/>
</dbReference>
<dbReference type="Gene3D" id="3.40.50.300">
    <property type="entry name" value="P-loop containing nucleotide triphosphate hydrolases"/>
    <property type="match status" value="1"/>
</dbReference>
<dbReference type="HAMAP" id="MF_00096">
    <property type="entry name" value="MutS"/>
    <property type="match status" value="1"/>
</dbReference>
<dbReference type="InterPro" id="IPR005748">
    <property type="entry name" value="DNA_mismatch_repair_MutS"/>
</dbReference>
<dbReference type="InterPro" id="IPR007695">
    <property type="entry name" value="DNA_mismatch_repair_MutS-lik_N"/>
</dbReference>
<dbReference type="InterPro" id="IPR017261">
    <property type="entry name" value="DNA_mismatch_repair_MutS/MSH"/>
</dbReference>
<dbReference type="InterPro" id="IPR000432">
    <property type="entry name" value="DNA_mismatch_repair_MutS_C"/>
</dbReference>
<dbReference type="InterPro" id="IPR007861">
    <property type="entry name" value="DNA_mismatch_repair_MutS_clamp"/>
</dbReference>
<dbReference type="InterPro" id="IPR007696">
    <property type="entry name" value="DNA_mismatch_repair_MutS_core"/>
</dbReference>
<dbReference type="InterPro" id="IPR016151">
    <property type="entry name" value="DNA_mismatch_repair_MutS_N"/>
</dbReference>
<dbReference type="InterPro" id="IPR036187">
    <property type="entry name" value="DNA_mismatch_repair_MutS_sf"/>
</dbReference>
<dbReference type="InterPro" id="IPR007860">
    <property type="entry name" value="DNA_mmatch_repair_MutS_con_dom"/>
</dbReference>
<dbReference type="InterPro" id="IPR045076">
    <property type="entry name" value="MutS"/>
</dbReference>
<dbReference type="InterPro" id="IPR036678">
    <property type="entry name" value="MutS_con_dom_sf"/>
</dbReference>
<dbReference type="InterPro" id="IPR027417">
    <property type="entry name" value="P-loop_NTPase"/>
</dbReference>
<dbReference type="NCBIfam" id="TIGR01070">
    <property type="entry name" value="mutS1"/>
    <property type="match status" value="1"/>
</dbReference>
<dbReference type="NCBIfam" id="NF003810">
    <property type="entry name" value="PRK05399.1"/>
    <property type="match status" value="1"/>
</dbReference>
<dbReference type="PANTHER" id="PTHR11361:SF34">
    <property type="entry name" value="DNA MISMATCH REPAIR PROTEIN MSH1, MITOCHONDRIAL"/>
    <property type="match status" value="1"/>
</dbReference>
<dbReference type="PANTHER" id="PTHR11361">
    <property type="entry name" value="DNA MISMATCH REPAIR PROTEIN MUTS FAMILY MEMBER"/>
    <property type="match status" value="1"/>
</dbReference>
<dbReference type="Pfam" id="PF01624">
    <property type="entry name" value="MutS_I"/>
    <property type="match status" value="1"/>
</dbReference>
<dbReference type="Pfam" id="PF05188">
    <property type="entry name" value="MutS_II"/>
    <property type="match status" value="1"/>
</dbReference>
<dbReference type="Pfam" id="PF05192">
    <property type="entry name" value="MutS_III"/>
    <property type="match status" value="1"/>
</dbReference>
<dbReference type="Pfam" id="PF05190">
    <property type="entry name" value="MutS_IV"/>
    <property type="match status" value="1"/>
</dbReference>
<dbReference type="Pfam" id="PF00488">
    <property type="entry name" value="MutS_V"/>
    <property type="match status" value="1"/>
</dbReference>
<dbReference type="PIRSF" id="PIRSF037677">
    <property type="entry name" value="DNA_mis_repair_Msh6"/>
    <property type="match status" value="1"/>
</dbReference>
<dbReference type="SMART" id="SM00534">
    <property type="entry name" value="MUTSac"/>
    <property type="match status" value="1"/>
</dbReference>
<dbReference type="SMART" id="SM00533">
    <property type="entry name" value="MUTSd"/>
    <property type="match status" value="1"/>
</dbReference>
<dbReference type="SUPFAM" id="SSF55271">
    <property type="entry name" value="DNA repair protein MutS, domain I"/>
    <property type="match status" value="1"/>
</dbReference>
<dbReference type="SUPFAM" id="SSF53150">
    <property type="entry name" value="DNA repair protein MutS, domain II"/>
    <property type="match status" value="1"/>
</dbReference>
<dbReference type="SUPFAM" id="SSF48334">
    <property type="entry name" value="DNA repair protein MutS, domain III"/>
    <property type="match status" value="1"/>
</dbReference>
<dbReference type="SUPFAM" id="SSF52540">
    <property type="entry name" value="P-loop containing nucleoside triphosphate hydrolases"/>
    <property type="match status" value="1"/>
</dbReference>
<dbReference type="PROSITE" id="PS00486">
    <property type="entry name" value="DNA_MISMATCH_REPAIR_2"/>
    <property type="match status" value="1"/>
</dbReference>
<keyword id="KW-0067">ATP-binding</keyword>
<keyword id="KW-0227">DNA damage</keyword>
<keyword id="KW-0234">DNA repair</keyword>
<keyword id="KW-0238">DNA-binding</keyword>
<keyword id="KW-0547">Nucleotide-binding</keyword>
<keyword id="KW-1185">Reference proteome</keyword>
<protein>
    <recommendedName>
        <fullName evidence="1">DNA mismatch repair protein MutS</fullName>
    </recommendedName>
</protein>
<organism>
    <name type="scientific">Shewanella sediminis (strain HAW-EB3)</name>
    <dbReference type="NCBI Taxonomy" id="425104"/>
    <lineage>
        <taxon>Bacteria</taxon>
        <taxon>Pseudomonadati</taxon>
        <taxon>Pseudomonadota</taxon>
        <taxon>Gammaproteobacteria</taxon>
        <taxon>Alteromonadales</taxon>
        <taxon>Shewanellaceae</taxon>
        <taxon>Shewanella</taxon>
    </lineage>
</organism>
<evidence type="ECO:0000255" key="1">
    <source>
        <dbReference type="HAMAP-Rule" id="MF_00096"/>
    </source>
</evidence>
<name>MUTS_SHESH</name>
<comment type="function">
    <text evidence="1">This protein is involved in the repair of mismatches in DNA. It is possible that it carries out the mismatch recognition step. This protein has a weak ATPase activity.</text>
</comment>
<comment type="similarity">
    <text evidence="1">Belongs to the DNA mismatch repair MutS family.</text>
</comment>
<sequence>MNAIDTQNLEKHTPMMRQYLTLKAEHPEMLLFYRMGDFYELFYDDAKKASELLGISLTARGKSGGDPIPMAGLPYHAVEGYLAKLVQLRVSVAICEQVGDPATSKGPVERKVVRLVTPGTLTDEALLQEKQDNLLAAVYHGKSGYGYATLDISSGRFVVAELASTEALEAELQRTNPAELLYSEDFSEMGLISGFNGKRRRPEWEFDFDTSQKLLLDQFGTKDLRGFGLDNARLSLQAAGCLMQYVKDTQRTALPHINSIVRFNQSDSIVLDAATRRNLELTVNLQGGHENTLASVLDNTATPMGSRMLQRWIHEPLRNQQQIESRQSALTEILDTNLFETLEPQLKALGDVERITARLALRSARPRDFARLKQAISLLPEIQQSLANCQSAHLHHLARMLGEFPDELELLERAIVDNPPMLIRDGGVLKEGYNAELDQWRALSQGATDYLSELEAREKEQTGISTLKVGYNRVHGYYIEVSRRESDLVPLSYQRRQTLKNTERYIIAELKEHEEKVLSSQGKALALEKQLWEQLFDQILPKLHDLQLFAQGAAELDVINNFAERAETLNYSCPTLSQKSGIHIEGGRHPVVEQVSQTPFIANPVTLNPARKMLIVTGPNMGGKSTYMRQVALITLMTHIGCYVPAQSAVIGPVDRIFTRIGAADDLASGRSTFMVEMTETANILHNATTESLVLMDEIGRGTSTYDGLSLAWSAAEYLAQKIEAMTLFATHYFELTQLPELISNVENVHLDAIEHGDTIVFMHAVQEGAASKSYGLQVAALAGVPGKVITAAKHKLHHLESRDTNSAVDSMTTSNQQSMVFDEPVNSALNDALDKIHPDELSPRQALDILYELKRLTS</sequence>